<name>ISPG_ALLAM</name>
<evidence type="ECO:0000255" key="1">
    <source>
        <dbReference type="HAMAP-Rule" id="MF_00159"/>
    </source>
</evidence>
<gene>
    <name evidence="1" type="primary">ispG</name>
    <name type="ordered locus">Avi_4332</name>
</gene>
<protein>
    <recommendedName>
        <fullName evidence="1">4-hydroxy-3-methylbut-2-en-1-yl diphosphate synthase (flavodoxin)</fullName>
        <ecNumber evidence="1">1.17.7.3</ecNumber>
    </recommendedName>
    <alternativeName>
        <fullName evidence="1">1-hydroxy-2-methyl-2-(E)-butenyl 4-diphosphate synthase</fullName>
    </alternativeName>
</protein>
<organism>
    <name type="scientific">Allorhizobium ampelinum (strain ATCC BAA-846 / DSM 112012 / S4)</name>
    <name type="common">Agrobacterium vitis (strain S4)</name>
    <dbReference type="NCBI Taxonomy" id="311402"/>
    <lineage>
        <taxon>Bacteria</taxon>
        <taxon>Pseudomonadati</taxon>
        <taxon>Pseudomonadota</taxon>
        <taxon>Alphaproteobacteria</taxon>
        <taxon>Hyphomicrobiales</taxon>
        <taxon>Rhizobiaceae</taxon>
        <taxon>Rhizobium/Agrobacterium group</taxon>
        <taxon>Allorhizobium</taxon>
        <taxon>Allorhizobium ampelinum</taxon>
    </lineage>
</organism>
<accession>B9JV07</accession>
<comment type="function">
    <text evidence="1">Converts 2C-methyl-D-erythritol 2,4-cyclodiphosphate (ME-2,4cPP) into 1-hydroxy-2-methyl-2-(E)-butenyl 4-diphosphate.</text>
</comment>
<comment type="catalytic activity">
    <reaction evidence="1">
        <text>(2E)-4-hydroxy-3-methylbut-2-enyl diphosphate + oxidized [flavodoxin] + H2O + 2 H(+) = 2-C-methyl-D-erythritol 2,4-cyclic diphosphate + reduced [flavodoxin]</text>
        <dbReference type="Rhea" id="RHEA:43604"/>
        <dbReference type="Rhea" id="RHEA-COMP:10622"/>
        <dbReference type="Rhea" id="RHEA-COMP:10623"/>
        <dbReference type="ChEBI" id="CHEBI:15377"/>
        <dbReference type="ChEBI" id="CHEBI:15378"/>
        <dbReference type="ChEBI" id="CHEBI:57618"/>
        <dbReference type="ChEBI" id="CHEBI:58210"/>
        <dbReference type="ChEBI" id="CHEBI:58483"/>
        <dbReference type="ChEBI" id="CHEBI:128753"/>
        <dbReference type="EC" id="1.17.7.3"/>
    </reaction>
</comment>
<comment type="cofactor">
    <cofactor evidence="1">
        <name>[4Fe-4S] cluster</name>
        <dbReference type="ChEBI" id="CHEBI:49883"/>
    </cofactor>
    <text evidence="1">Binds 1 [4Fe-4S] cluster.</text>
</comment>
<comment type="pathway">
    <text evidence="1">Isoprenoid biosynthesis; isopentenyl diphosphate biosynthesis via DXP pathway; isopentenyl diphosphate from 1-deoxy-D-xylulose 5-phosphate: step 5/6.</text>
</comment>
<comment type="similarity">
    <text evidence="1">Belongs to the IspG family.</text>
</comment>
<keyword id="KW-0004">4Fe-4S</keyword>
<keyword id="KW-0408">Iron</keyword>
<keyword id="KW-0411">Iron-sulfur</keyword>
<keyword id="KW-0414">Isoprene biosynthesis</keyword>
<keyword id="KW-0479">Metal-binding</keyword>
<keyword id="KW-0560">Oxidoreductase</keyword>
<keyword id="KW-1185">Reference proteome</keyword>
<sequence>MAPAEDFDPKPRRASVAVDVGGVIVGGGAPVVVQSMTNTDTADIDGTVAQVAALHKAGSEIVRITVDRDESAAAVPKIRDRLERLGLDVPLIGDFHYIGHKLLADHPACAEALAKYRINPGNVGFKDKKDKQFADIIEMAIRYDKPVRIGVNWGSLDQELLTQLMDENQAKGFPLSARQVTREAICQSALLSAELAEEIGLSRNRIILSAKVSQVQDLIAVYSMLASRSDHALHLGLTEAGMGSKGIVASSAAMGYVLQQGIGDTIRVSLTPEPNGDRTREVQVAQELLQVMGFRQFIPVVAACPGCGRTTSTVFQELAQKIQSDIRKNMPVWREKYPGVEGLNVAVMGCIVNGPGESKHADIGISLPGTGENPAAPVFIDGEKALTLRGPKIAEDFEALVIDYIEKRYGQRSAAE</sequence>
<dbReference type="EC" id="1.17.7.3" evidence="1"/>
<dbReference type="EMBL" id="CP000633">
    <property type="protein sequence ID" value="ACM38145.1"/>
    <property type="molecule type" value="Genomic_DNA"/>
</dbReference>
<dbReference type="RefSeq" id="WP_015917556.1">
    <property type="nucleotide sequence ID" value="NC_011989.1"/>
</dbReference>
<dbReference type="SMR" id="B9JV07"/>
<dbReference type="STRING" id="311402.Avi_4332"/>
<dbReference type="KEGG" id="avi:Avi_4332"/>
<dbReference type="eggNOG" id="COG0821">
    <property type="taxonomic scope" value="Bacteria"/>
</dbReference>
<dbReference type="HOGENOM" id="CLU_042258_1_0_5"/>
<dbReference type="UniPathway" id="UPA00056">
    <property type="reaction ID" value="UER00096"/>
</dbReference>
<dbReference type="Proteomes" id="UP000001596">
    <property type="component" value="Chromosome 1"/>
</dbReference>
<dbReference type="GO" id="GO:0051539">
    <property type="term" value="F:4 iron, 4 sulfur cluster binding"/>
    <property type="evidence" value="ECO:0007669"/>
    <property type="project" value="UniProtKB-UniRule"/>
</dbReference>
<dbReference type="GO" id="GO:0046429">
    <property type="term" value="F:4-hydroxy-3-methylbut-2-en-1-yl diphosphate synthase activity (ferredoxin)"/>
    <property type="evidence" value="ECO:0007669"/>
    <property type="project" value="UniProtKB-UniRule"/>
</dbReference>
<dbReference type="GO" id="GO:0141197">
    <property type="term" value="F:4-hydroxy-3-methylbut-2-enyl-diphosphate synthase activity (flavodoxin)"/>
    <property type="evidence" value="ECO:0007669"/>
    <property type="project" value="UniProtKB-EC"/>
</dbReference>
<dbReference type="GO" id="GO:0005506">
    <property type="term" value="F:iron ion binding"/>
    <property type="evidence" value="ECO:0007669"/>
    <property type="project" value="InterPro"/>
</dbReference>
<dbReference type="GO" id="GO:0019288">
    <property type="term" value="P:isopentenyl diphosphate biosynthetic process, methylerythritol 4-phosphate pathway"/>
    <property type="evidence" value="ECO:0007669"/>
    <property type="project" value="UniProtKB-UniRule"/>
</dbReference>
<dbReference type="GO" id="GO:0016114">
    <property type="term" value="P:terpenoid biosynthetic process"/>
    <property type="evidence" value="ECO:0007669"/>
    <property type="project" value="InterPro"/>
</dbReference>
<dbReference type="FunFam" id="3.30.413.10:FF:000012">
    <property type="entry name" value="4-hydroxy-3-methylbut-2-en-1-yl diphosphate synthase (flavodoxin)"/>
    <property type="match status" value="1"/>
</dbReference>
<dbReference type="Gene3D" id="3.20.20.20">
    <property type="entry name" value="Dihydropteroate synthase-like"/>
    <property type="match status" value="1"/>
</dbReference>
<dbReference type="Gene3D" id="3.30.413.10">
    <property type="entry name" value="Sulfite Reductase Hemoprotein, domain 1"/>
    <property type="match status" value="1"/>
</dbReference>
<dbReference type="HAMAP" id="MF_00159">
    <property type="entry name" value="IspG"/>
    <property type="match status" value="1"/>
</dbReference>
<dbReference type="InterPro" id="IPR011005">
    <property type="entry name" value="Dihydropteroate_synth-like_sf"/>
</dbReference>
<dbReference type="InterPro" id="IPR016425">
    <property type="entry name" value="IspG_bac"/>
</dbReference>
<dbReference type="InterPro" id="IPR004588">
    <property type="entry name" value="IspG_bac-typ"/>
</dbReference>
<dbReference type="InterPro" id="IPR045854">
    <property type="entry name" value="NO2/SO3_Rdtase_4Fe4S_sf"/>
</dbReference>
<dbReference type="NCBIfam" id="TIGR00612">
    <property type="entry name" value="ispG_gcpE"/>
    <property type="match status" value="1"/>
</dbReference>
<dbReference type="NCBIfam" id="NF001540">
    <property type="entry name" value="PRK00366.1"/>
    <property type="match status" value="1"/>
</dbReference>
<dbReference type="PANTHER" id="PTHR30454">
    <property type="entry name" value="4-HYDROXY-3-METHYLBUT-2-EN-1-YL DIPHOSPHATE SYNTHASE"/>
    <property type="match status" value="1"/>
</dbReference>
<dbReference type="PANTHER" id="PTHR30454:SF0">
    <property type="entry name" value="4-HYDROXY-3-METHYLBUT-2-EN-1-YL DIPHOSPHATE SYNTHASE (FERREDOXIN), CHLOROPLASTIC"/>
    <property type="match status" value="1"/>
</dbReference>
<dbReference type="Pfam" id="PF04551">
    <property type="entry name" value="GcpE"/>
    <property type="match status" value="1"/>
</dbReference>
<dbReference type="PIRSF" id="PIRSF004640">
    <property type="entry name" value="IspG"/>
    <property type="match status" value="1"/>
</dbReference>
<dbReference type="SUPFAM" id="SSF56014">
    <property type="entry name" value="Nitrite and sulphite reductase 4Fe-4S domain-like"/>
    <property type="match status" value="1"/>
</dbReference>
<feature type="chain" id="PRO_1000123429" description="4-hydroxy-3-methylbut-2-en-1-yl diphosphate synthase (flavodoxin)">
    <location>
        <begin position="1"/>
        <end position="416"/>
    </location>
</feature>
<feature type="binding site" evidence="1">
    <location>
        <position position="304"/>
    </location>
    <ligand>
        <name>[4Fe-4S] cluster</name>
        <dbReference type="ChEBI" id="CHEBI:49883"/>
    </ligand>
</feature>
<feature type="binding site" evidence="1">
    <location>
        <position position="307"/>
    </location>
    <ligand>
        <name>[4Fe-4S] cluster</name>
        <dbReference type="ChEBI" id="CHEBI:49883"/>
    </ligand>
</feature>
<feature type="binding site" evidence="1">
    <location>
        <position position="350"/>
    </location>
    <ligand>
        <name>[4Fe-4S] cluster</name>
        <dbReference type="ChEBI" id="CHEBI:49883"/>
    </ligand>
</feature>
<feature type="binding site" evidence="1">
    <location>
        <position position="357"/>
    </location>
    <ligand>
        <name>[4Fe-4S] cluster</name>
        <dbReference type="ChEBI" id="CHEBI:49883"/>
    </ligand>
</feature>
<reference key="1">
    <citation type="journal article" date="2009" name="J. Bacteriol.">
        <title>Genome sequences of three Agrobacterium biovars help elucidate the evolution of multichromosome genomes in bacteria.</title>
        <authorList>
            <person name="Slater S.C."/>
            <person name="Goldman B.S."/>
            <person name="Goodner B."/>
            <person name="Setubal J.C."/>
            <person name="Farrand S.K."/>
            <person name="Nester E.W."/>
            <person name="Burr T.J."/>
            <person name="Banta L."/>
            <person name="Dickerman A.W."/>
            <person name="Paulsen I."/>
            <person name="Otten L."/>
            <person name="Suen G."/>
            <person name="Welch R."/>
            <person name="Almeida N.F."/>
            <person name="Arnold F."/>
            <person name="Burton O.T."/>
            <person name="Du Z."/>
            <person name="Ewing A."/>
            <person name="Godsy E."/>
            <person name="Heisel S."/>
            <person name="Houmiel K.L."/>
            <person name="Jhaveri J."/>
            <person name="Lu J."/>
            <person name="Miller N.M."/>
            <person name="Norton S."/>
            <person name="Chen Q."/>
            <person name="Phoolcharoen W."/>
            <person name="Ohlin V."/>
            <person name="Ondrusek D."/>
            <person name="Pride N."/>
            <person name="Stricklin S.L."/>
            <person name="Sun J."/>
            <person name="Wheeler C."/>
            <person name="Wilson L."/>
            <person name="Zhu H."/>
            <person name="Wood D.W."/>
        </authorList>
    </citation>
    <scope>NUCLEOTIDE SEQUENCE [LARGE SCALE GENOMIC DNA]</scope>
    <source>
        <strain>ATCC BAA-846 / DSM 112012 / S4</strain>
    </source>
</reference>
<proteinExistence type="inferred from homology"/>